<feature type="chain" id="PRO_0000360134" description="Tryptophan 2,3-dioxygenase">
    <location>
        <begin position="1"/>
        <end position="286"/>
    </location>
</feature>
<feature type="binding site" evidence="1">
    <location>
        <begin position="55"/>
        <end position="59"/>
    </location>
    <ligand>
        <name>substrate</name>
    </ligand>
</feature>
<feature type="binding site" evidence="1">
    <location>
        <position position="117"/>
    </location>
    <ligand>
        <name>substrate</name>
    </ligand>
</feature>
<feature type="binding site" evidence="1">
    <location>
        <position position="121"/>
    </location>
    <ligand>
        <name>substrate</name>
    </ligand>
</feature>
<feature type="binding site" description="axial binding residue" evidence="1">
    <location>
        <position position="244"/>
    </location>
    <ligand>
        <name>heme</name>
        <dbReference type="ChEBI" id="CHEBI:30413"/>
    </ligand>
    <ligandPart>
        <name>Fe</name>
        <dbReference type="ChEBI" id="CHEBI:18248"/>
    </ligandPart>
</feature>
<feature type="binding site" evidence="1">
    <location>
        <position position="258"/>
    </location>
    <ligand>
        <name>substrate</name>
    </ligand>
</feature>
<dbReference type="EC" id="1.13.11.11" evidence="1"/>
<dbReference type="EMBL" id="CP000961">
    <property type="protein sequence ID" value="ACA85695.1"/>
    <property type="molecule type" value="Genomic_DNA"/>
</dbReference>
<dbReference type="RefSeq" id="WP_012324041.1">
    <property type="nucleotide sequence ID" value="NC_010506.1"/>
</dbReference>
<dbReference type="SMR" id="B1KJM2"/>
<dbReference type="STRING" id="392500.Swoo_1403"/>
<dbReference type="KEGG" id="swd:Swoo_1403"/>
<dbReference type="eggNOG" id="COG3483">
    <property type="taxonomic scope" value="Bacteria"/>
</dbReference>
<dbReference type="HOGENOM" id="CLU_063240_0_0_6"/>
<dbReference type="UniPathway" id="UPA00333">
    <property type="reaction ID" value="UER00453"/>
</dbReference>
<dbReference type="Proteomes" id="UP000002168">
    <property type="component" value="Chromosome"/>
</dbReference>
<dbReference type="GO" id="GO:0020037">
    <property type="term" value="F:heme binding"/>
    <property type="evidence" value="ECO:0000250"/>
    <property type="project" value="UniProtKB"/>
</dbReference>
<dbReference type="GO" id="GO:0046872">
    <property type="term" value="F:metal ion binding"/>
    <property type="evidence" value="ECO:0007669"/>
    <property type="project" value="UniProtKB-KW"/>
</dbReference>
<dbReference type="GO" id="GO:0004833">
    <property type="term" value="F:tryptophan 2,3-dioxygenase activity"/>
    <property type="evidence" value="ECO:0000250"/>
    <property type="project" value="UniProtKB"/>
</dbReference>
<dbReference type="GO" id="GO:0019442">
    <property type="term" value="P:L-tryptophan catabolic process to acetyl-CoA"/>
    <property type="evidence" value="ECO:0007669"/>
    <property type="project" value="TreeGrafter"/>
</dbReference>
<dbReference type="GO" id="GO:0019441">
    <property type="term" value="P:L-tryptophan catabolic process to kynurenine"/>
    <property type="evidence" value="ECO:0000250"/>
    <property type="project" value="UniProtKB"/>
</dbReference>
<dbReference type="FunFam" id="1.20.58.480:FF:000001">
    <property type="entry name" value="Tryptophan 2,3-dioxygenase"/>
    <property type="match status" value="1"/>
</dbReference>
<dbReference type="Gene3D" id="1.20.58.480">
    <property type="match status" value="1"/>
</dbReference>
<dbReference type="HAMAP" id="MF_01972">
    <property type="entry name" value="T23O"/>
    <property type="match status" value="1"/>
</dbReference>
<dbReference type="InterPro" id="IPR037217">
    <property type="entry name" value="Trp/Indoleamine_2_3_dOase-like"/>
</dbReference>
<dbReference type="InterPro" id="IPR017485">
    <property type="entry name" value="Trp_2-3-dOase_bac"/>
</dbReference>
<dbReference type="InterPro" id="IPR004981">
    <property type="entry name" value="Trp_2_3_dOase"/>
</dbReference>
<dbReference type="NCBIfam" id="TIGR03036">
    <property type="entry name" value="trp_2_3_diox"/>
    <property type="match status" value="1"/>
</dbReference>
<dbReference type="PANTHER" id="PTHR10138">
    <property type="entry name" value="TRYPTOPHAN 2,3-DIOXYGENASE"/>
    <property type="match status" value="1"/>
</dbReference>
<dbReference type="PANTHER" id="PTHR10138:SF0">
    <property type="entry name" value="TRYPTOPHAN 2,3-DIOXYGENASE"/>
    <property type="match status" value="1"/>
</dbReference>
<dbReference type="Pfam" id="PF03301">
    <property type="entry name" value="Trp_dioxygenase"/>
    <property type="match status" value="1"/>
</dbReference>
<dbReference type="SUPFAM" id="SSF140959">
    <property type="entry name" value="Indolic compounds 2,3-dioxygenase-like"/>
    <property type="match status" value="1"/>
</dbReference>
<keyword id="KW-0223">Dioxygenase</keyword>
<keyword id="KW-0349">Heme</keyword>
<keyword id="KW-0408">Iron</keyword>
<keyword id="KW-0479">Metal-binding</keyword>
<keyword id="KW-0560">Oxidoreductase</keyword>
<keyword id="KW-1185">Reference proteome</keyword>
<keyword id="KW-0823">Tryptophan catabolism</keyword>
<gene>
    <name evidence="1" type="primary">kynA</name>
    <name type="ordered locus">Swoo_1403</name>
</gene>
<accession>B1KJM2</accession>
<reference key="1">
    <citation type="submission" date="2008-02" db="EMBL/GenBank/DDBJ databases">
        <title>Complete sequence of Shewanella woodyi ATCC 51908.</title>
        <authorList>
            <consortium name="US DOE Joint Genome Institute"/>
            <person name="Copeland A."/>
            <person name="Lucas S."/>
            <person name="Lapidus A."/>
            <person name="Glavina del Rio T."/>
            <person name="Dalin E."/>
            <person name="Tice H."/>
            <person name="Bruce D."/>
            <person name="Goodwin L."/>
            <person name="Pitluck S."/>
            <person name="Sims D."/>
            <person name="Brettin T."/>
            <person name="Detter J.C."/>
            <person name="Han C."/>
            <person name="Kuske C.R."/>
            <person name="Schmutz J."/>
            <person name="Larimer F."/>
            <person name="Land M."/>
            <person name="Hauser L."/>
            <person name="Kyrpides N."/>
            <person name="Lykidis A."/>
            <person name="Zhao J.-S."/>
            <person name="Richardson P."/>
        </authorList>
    </citation>
    <scope>NUCLEOTIDE SEQUENCE [LARGE SCALE GENOMIC DNA]</scope>
    <source>
        <strain>ATCC 51908 / MS32</strain>
    </source>
</reference>
<organism>
    <name type="scientific">Shewanella woodyi (strain ATCC 51908 / MS32)</name>
    <dbReference type="NCBI Taxonomy" id="392500"/>
    <lineage>
        <taxon>Bacteria</taxon>
        <taxon>Pseudomonadati</taxon>
        <taxon>Pseudomonadota</taxon>
        <taxon>Gammaproteobacteria</taxon>
        <taxon>Alteromonadales</taxon>
        <taxon>Shewanellaceae</taxon>
        <taxon>Shewanella</taxon>
    </lineage>
</organism>
<sequence length="286" mass="33077">MVCPHNNPKQGNTREMEDSIHTDFNNDMSYGDYLCLEQVLSAQHPQSEVHDEMLFIIIHQTSELWLKLAGNELDTMIHNVQQGDFSHAFKVISRVKQILNQLTQSWNILSTLTPVDYLKFRDALGRSSGFQSYGYRKIEFLLGNKNADLIQVHESNEQVHSELQGILERPSLYDEVIRVLHKQGLPIDDSALNRDFTQPYQANESVLNAWLSVYRNADEHFELYELAEKLIDIEDAFQQWRFKHMYAVQRIIGNKMGTGGSSGVSFLKKALDISFFPELFELRTHL</sequence>
<protein>
    <recommendedName>
        <fullName evidence="1">Tryptophan 2,3-dioxygenase</fullName>
        <shortName evidence="1">TDO</shortName>
        <ecNumber evidence="1">1.13.11.11</ecNumber>
    </recommendedName>
    <alternativeName>
        <fullName evidence="1">Tryptamin 2,3-dioxygenase</fullName>
    </alternativeName>
    <alternativeName>
        <fullName evidence="1">Tryptophan oxygenase</fullName>
        <shortName evidence="1">TO</shortName>
        <shortName evidence="1">TRPO</shortName>
    </alternativeName>
    <alternativeName>
        <fullName evidence="1">Tryptophan pyrrolase</fullName>
    </alternativeName>
    <alternativeName>
        <fullName evidence="1">Tryptophanase</fullName>
    </alternativeName>
</protein>
<comment type="function">
    <text evidence="1">Heme-dependent dioxygenase that catalyzes the oxidative cleavage of the L-tryptophan (L-Trp) pyrrole ring and converts L-tryptophan to N-formyl-L-kynurenine. Catalyzes the oxidative cleavage of the indole moiety.</text>
</comment>
<comment type="catalytic activity">
    <reaction evidence="1">
        <text>L-tryptophan + O2 = N-formyl-L-kynurenine</text>
        <dbReference type="Rhea" id="RHEA:24536"/>
        <dbReference type="ChEBI" id="CHEBI:15379"/>
        <dbReference type="ChEBI" id="CHEBI:57912"/>
        <dbReference type="ChEBI" id="CHEBI:58629"/>
        <dbReference type="EC" id="1.13.11.11"/>
    </reaction>
</comment>
<comment type="cofactor">
    <cofactor evidence="1">
        <name>heme</name>
        <dbReference type="ChEBI" id="CHEBI:30413"/>
    </cofactor>
    <text evidence="1">Binds 1 heme group per subunit.</text>
</comment>
<comment type="pathway">
    <text evidence="1">Amino-acid degradation; L-tryptophan degradation via kynurenine pathway; L-kynurenine from L-tryptophan: step 1/2.</text>
</comment>
<comment type="subunit">
    <text evidence="1">Homotetramer.</text>
</comment>
<comment type="similarity">
    <text evidence="1">Belongs to the tryptophan 2,3-dioxygenase family.</text>
</comment>
<proteinExistence type="inferred from homology"/>
<evidence type="ECO:0000255" key="1">
    <source>
        <dbReference type="HAMAP-Rule" id="MF_01972"/>
    </source>
</evidence>
<name>T23O_SHEWM</name>